<accession>Q2N8X0</accession>
<name>PDXA_ERYLH</name>
<evidence type="ECO:0000255" key="1">
    <source>
        <dbReference type="HAMAP-Rule" id="MF_00536"/>
    </source>
</evidence>
<reference key="1">
    <citation type="journal article" date="2009" name="J. Bacteriol.">
        <title>Complete genome sequence of Erythrobacter litoralis HTCC2594.</title>
        <authorList>
            <person name="Oh H.M."/>
            <person name="Giovannoni S.J."/>
            <person name="Ferriera S."/>
            <person name="Johnson J."/>
            <person name="Cho J.C."/>
        </authorList>
    </citation>
    <scope>NUCLEOTIDE SEQUENCE [LARGE SCALE GENOMIC DNA]</scope>
    <source>
        <strain>HTCC2594</strain>
    </source>
</reference>
<keyword id="KW-0170">Cobalt</keyword>
<keyword id="KW-0963">Cytoplasm</keyword>
<keyword id="KW-0460">Magnesium</keyword>
<keyword id="KW-0479">Metal-binding</keyword>
<keyword id="KW-0520">NAD</keyword>
<keyword id="KW-0521">NADP</keyword>
<keyword id="KW-0560">Oxidoreductase</keyword>
<keyword id="KW-0664">Pyridoxine biosynthesis</keyword>
<keyword id="KW-1185">Reference proteome</keyword>
<keyword id="KW-0862">Zinc</keyword>
<comment type="function">
    <text evidence="1">Catalyzes the NAD(P)-dependent oxidation of 4-(phosphooxy)-L-threonine (HTP) into 2-amino-3-oxo-4-(phosphooxy)butyric acid which spontaneously decarboxylates to form 3-amino-2-oxopropyl phosphate (AHAP).</text>
</comment>
<comment type="catalytic activity">
    <reaction evidence="1">
        <text>4-(phosphooxy)-L-threonine + NAD(+) = 3-amino-2-oxopropyl phosphate + CO2 + NADH</text>
        <dbReference type="Rhea" id="RHEA:32275"/>
        <dbReference type="ChEBI" id="CHEBI:16526"/>
        <dbReference type="ChEBI" id="CHEBI:57279"/>
        <dbReference type="ChEBI" id="CHEBI:57540"/>
        <dbReference type="ChEBI" id="CHEBI:57945"/>
        <dbReference type="ChEBI" id="CHEBI:58452"/>
        <dbReference type="EC" id="1.1.1.262"/>
    </reaction>
</comment>
<comment type="cofactor">
    <cofactor evidence="1">
        <name>Zn(2+)</name>
        <dbReference type="ChEBI" id="CHEBI:29105"/>
    </cofactor>
    <cofactor evidence="1">
        <name>Mg(2+)</name>
        <dbReference type="ChEBI" id="CHEBI:18420"/>
    </cofactor>
    <cofactor evidence="1">
        <name>Co(2+)</name>
        <dbReference type="ChEBI" id="CHEBI:48828"/>
    </cofactor>
    <text evidence="1">Binds 1 divalent metal cation per subunit. Can use ions such as Zn(2+), Mg(2+) or Co(2+).</text>
</comment>
<comment type="pathway">
    <text evidence="1">Cofactor biosynthesis; pyridoxine 5'-phosphate biosynthesis; pyridoxine 5'-phosphate from D-erythrose 4-phosphate: step 4/5.</text>
</comment>
<comment type="subunit">
    <text evidence="1">Homodimer.</text>
</comment>
<comment type="subcellular location">
    <subcellularLocation>
        <location evidence="1">Cytoplasm</location>
    </subcellularLocation>
</comment>
<comment type="miscellaneous">
    <text evidence="1">The active site is located at the dimer interface.</text>
</comment>
<comment type="similarity">
    <text evidence="1">Belongs to the PdxA family.</text>
</comment>
<gene>
    <name evidence="1" type="primary">pdxA</name>
    <name type="ordered locus">ELI_08895</name>
</gene>
<organism>
    <name type="scientific">Erythrobacter litoralis (strain HTCC2594)</name>
    <dbReference type="NCBI Taxonomy" id="314225"/>
    <lineage>
        <taxon>Bacteria</taxon>
        <taxon>Pseudomonadati</taxon>
        <taxon>Pseudomonadota</taxon>
        <taxon>Alphaproteobacteria</taxon>
        <taxon>Sphingomonadales</taxon>
        <taxon>Erythrobacteraceae</taxon>
        <taxon>Erythrobacter/Porphyrobacter group</taxon>
        <taxon>Erythrobacter</taxon>
    </lineage>
</organism>
<feature type="chain" id="PRO_1000051500" description="4-hydroxythreonine-4-phosphate dehydrogenase">
    <location>
        <begin position="1"/>
        <end position="336"/>
    </location>
</feature>
<feature type="binding site" evidence="1">
    <location>
        <position position="140"/>
    </location>
    <ligand>
        <name>substrate</name>
    </ligand>
</feature>
<feature type="binding site" evidence="1">
    <location>
        <position position="171"/>
    </location>
    <ligand>
        <name>a divalent metal cation</name>
        <dbReference type="ChEBI" id="CHEBI:60240"/>
        <note>ligand shared between dimeric partners</note>
    </ligand>
</feature>
<feature type="binding site" evidence="1">
    <location>
        <position position="216"/>
    </location>
    <ligand>
        <name>a divalent metal cation</name>
        <dbReference type="ChEBI" id="CHEBI:60240"/>
        <note>ligand shared between dimeric partners</note>
    </ligand>
</feature>
<feature type="binding site" evidence="1">
    <location>
        <position position="271"/>
    </location>
    <ligand>
        <name>a divalent metal cation</name>
        <dbReference type="ChEBI" id="CHEBI:60240"/>
        <note>ligand shared between dimeric partners</note>
    </ligand>
</feature>
<feature type="binding site" evidence="1">
    <location>
        <position position="279"/>
    </location>
    <ligand>
        <name>substrate</name>
    </ligand>
</feature>
<feature type="binding site" evidence="1">
    <location>
        <position position="288"/>
    </location>
    <ligand>
        <name>substrate</name>
    </ligand>
</feature>
<feature type="binding site" evidence="1">
    <location>
        <position position="297"/>
    </location>
    <ligand>
        <name>substrate</name>
    </ligand>
</feature>
<protein>
    <recommendedName>
        <fullName evidence="1">4-hydroxythreonine-4-phosphate dehydrogenase</fullName>
        <ecNumber evidence="1">1.1.1.262</ecNumber>
    </recommendedName>
    <alternativeName>
        <fullName evidence="1">4-(phosphohydroxy)-L-threonine dehydrogenase</fullName>
    </alternativeName>
</protein>
<sequence>MGEPQRPLAVSLGDPAGIGPEIIVHAWRMRDSANLAPFAVAGGANVLRSATEALGVPCPIQEIDDIAEANSAFLEALPVIKGLDGAYLPGAPDPIGAKLALKSLEMATRLATAGHASGVVTAPIAKGLLEQVGFTHPGQTEFLAAACGLPEDASVMMLAGPSLRAVPLTVHCPLAEVPGLLSIGLIVERGRIVASALQRDFGIERPRLAVTGLNPHAGEDGKFGNEEQDVIAPAIAELLADGITATGPHPADALFSPHSRAGFDAALCMYHDQALIPVKALDFDQGVNVTLGLPIVRTSPDHGTAFDIAGRGTAHPGAMVFALLMAGECAARRADA</sequence>
<dbReference type="EC" id="1.1.1.262" evidence="1"/>
<dbReference type="EMBL" id="CP000157">
    <property type="protein sequence ID" value="ABC63871.1"/>
    <property type="molecule type" value="Genomic_DNA"/>
</dbReference>
<dbReference type="RefSeq" id="WP_011414701.1">
    <property type="nucleotide sequence ID" value="NC_007722.1"/>
</dbReference>
<dbReference type="SMR" id="Q2N8X0"/>
<dbReference type="STRING" id="314225.ELI_08895"/>
<dbReference type="KEGG" id="eli:ELI_08895"/>
<dbReference type="eggNOG" id="COG1995">
    <property type="taxonomic scope" value="Bacteria"/>
</dbReference>
<dbReference type="HOGENOM" id="CLU_040168_2_0_5"/>
<dbReference type="OrthoDB" id="9801783at2"/>
<dbReference type="UniPathway" id="UPA00244">
    <property type="reaction ID" value="UER00312"/>
</dbReference>
<dbReference type="Proteomes" id="UP000008808">
    <property type="component" value="Chromosome"/>
</dbReference>
<dbReference type="GO" id="GO:0005737">
    <property type="term" value="C:cytoplasm"/>
    <property type="evidence" value="ECO:0007669"/>
    <property type="project" value="UniProtKB-SubCell"/>
</dbReference>
<dbReference type="GO" id="GO:0050570">
    <property type="term" value="F:4-hydroxythreonine-4-phosphate dehydrogenase activity"/>
    <property type="evidence" value="ECO:0007669"/>
    <property type="project" value="UniProtKB-UniRule"/>
</dbReference>
<dbReference type="GO" id="GO:0050897">
    <property type="term" value="F:cobalt ion binding"/>
    <property type="evidence" value="ECO:0007669"/>
    <property type="project" value="UniProtKB-UniRule"/>
</dbReference>
<dbReference type="GO" id="GO:0000287">
    <property type="term" value="F:magnesium ion binding"/>
    <property type="evidence" value="ECO:0007669"/>
    <property type="project" value="UniProtKB-UniRule"/>
</dbReference>
<dbReference type="GO" id="GO:0051287">
    <property type="term" value="F:NAD binding"/>
    <property type="evidence" value="ECO:0007669"/>
    <property type="project" value="InterPro"/>
</dbReference>
<dbReference type="GO" id="GO:0008270">
    <property type="term" value="F:zinc ion binding"/>
    <property type="evidence" value="ECO:0007669"/>
    <property type="project" value="UniProtKB-UniRule"/>
</dbReference>
<dbReference type="GO" id="GO:0042823">
    <property type="term" value="P:pyridoxal phosphate biosynthetic process"/>
    <property type="evidence" value="ECO:0007669"/>
    <property type="project" value="UniProtKB-UniRule"/>
</dbReference>
<dbReference type="GO" id="GO:0008615">
    <property type="term" value="P:pyridoxine biosynthetic process"/>
    <property type="evidence" value="ECO:0007669"/>
    <property type="project" value="UniProtKB-UniRule"/>
</dbReference>
<dbReference type="Gene3D" id="3.40.718.10">
    <property type="entry name" value="Isopropylmalate Dehydrogenase"/>
    <property type="match status" value="1"/>
</dbReference>
<dbReference type="HAMAP" id="MF_00536">
    <property type="entry name" value="PdxA"/>
    <property type="match status" value="1"/>
</dbReference>
<dbReference type="InterPro" id="IPR037510">
    <property type="entry name" value="PdxA"/>
</dbReference>
<dbReference type="InterPro" id="IPR005255">
    <property type="entry name" value="PdxA_fam"/>
</dbReference>
<dbReference type="NCBIfam" id="TIGR00557">
    <property type="entry name" value="pdxA"/>
    <property type="match status" value="1"/>
</dbReference>
<dbReference type="NCBIfam" id="NF003699">
    <property type="entry name" value="PRK05312.1"/>
    <property type="match status" value="1"/>
</dbReference>
<dbReference type="PANTHER" id="PTHR30004">
    <property type="entry name" value="4-HYDROXYTHREONINE-4-PHOSPHATE DEHYDROGENASE"/>
    <property type="match status" value="1"/>
</dbReference>
<dbReference type="PANTHER" id="PTHR30004:SF6">
    <property type="entry name" value="D-THREONATE 4-PHOSPHATE DEHYDROGENASE"/>
    <property type="match status" value="1"/>
</dbReference>
<dbReference type="Pfam" id="PF04166">
    <property type="entry name" value="PdxA"/>
    <property type="match status" value="1"/>
</dbReference>
<dbReference type="SUPFAM" id="SSF53659">
    <property type="entry name" value="Isocitrate/Isopropylmalate dehydrogenase-like"/>
    <property type="match status" value="1"/>
</dbReference>
<proteinExistence type="inferred from homology"/>